<sequence>IALAGLSILLFVYMGRNVEDPRAQLIFVATLMVPLVSISSYTGLVSGLTVGFLEMPAGHALAGMGAGPEGGVFTPWGRYLTWAFSTPMILIALGLLAGSNMSKLFTAVVADVGMCITGLAAALTTSSYLLRWVWYGISCAFFVVVLYILLAEWAKDAEVAGTADIFNTLKVLTVVLWLGYPIFWALGAEGLAVLDIAITSWAYSGM</sequence>
<name>BACH_HALHM</name>
<protein>
    <recommendedName>
        <fullName>Halorhodopsin</fullName>
        <shortName>HR</shortName>
    </recommendedName>
</protein>
<reference key="1">
    <citation type="journal article" date="1992" name="Biochim. Biophys. Acta">
        <title>Properties and the primary structure of a new halorhodopsin from halobacterial strain mex.</title>
        <authorList>
            <person name="Otomo J."/>
            <person name="Tomioka H."/>
            <person name="Sasabe H."/>
        </authorList>
    </citation>
    <scope>NUCLEOTIDE SEQUENCE [GENOMIC DNA]</scope>
</reference>
<dbReference type="EMBL" id="D11136">
    <property type="protein sequence ID" value="BAA01910.1"/>
    <property type="molecule type" value="Genomic_DNA"/>
</dbReference>
<dbReference type="SMR" id="P33970"/>
<dbReference type="GO" id="GO:0005886">
    <property type="term" value="C:plasma membrane"/>
    <property type="evidence" value="ECO:0007669"/>
    <property type="project" value="UniProtKB-SubCell"/>
</dbReference>
<dbReference type="GO" id="GO:0005216">
    <property type="term" value="F:monoatomic ion channel activity"/>
    <property type="evidence" value="ECO:0007669"/>
    <property type="project" value="InterPro"/>
</dbReference>
<dbReference type="GO" id="GO:0009881">
    <property type="term" value="F:photoreceptor activity"/>
    <property type="evidence" value="ECO:0007669"/>
    <property type="project" value="UniProtKB-KW"/>
</dbReference>
<dbReference type="GO" id="GO:0007602">
    <property type="term" value="P:phototransduction"/>
    <property type="evidence" value="ECO:0007669"/>
    <property type="project" value="UniProtKB-KW"/>
</dbReference>
<dbReference type="Gene3D" id="1.20.1070.10">
    <property type="entry name" value="Rhodopsin 7-helix transmembrane proteins"/>
    <property type="match status" value="1"/>
</dbReference>
<dbReference type="InterPro" id="IPR001425">
    <property type="entry name" value="Arc/bac/fun_rhodopsins"/>
</dbReference>
<dbReference type="InterPro" id="IPR018229">
    <property type="entry name" value="Rhodopsin_retinal_BS"/>
</dbReference>
<dbReference type="PANTHER" id="PTHR28286">
    <property type="match status" value="1"/>
</dbReference>
<dbReference type="PANTHER" id="PTHR28286:SF2">
    <property type="entry name" value="BACTERIORHODOPSIN _OPSIN, NOPA (EUROFUNG)"/>
    <property type="match status" value="1"/>
</dbReference>
<dbReference type="Pfam" id="PF01036">
    <property type="entry name" value="Bac_rhodopsin"/>
    <property type="match status" value="1"/>
</dbReference>
<dbReference type="PRINTS" id="PR00251">
    <property type="entry name" value="BACTRLOPSIN"/>
</dbReference>
<dbReference type="SMART" id="SM01021">
    <property type="entry name" value="Bac_rhodopsin"/>
    <property type="match status" value="1"/>
</dbReference>
<dbReference type="SUPFAM" id="SSF81321">
    <property type="entry name" value="Family A G protein-coupled receptor-like"/>
    <property type="match status" value="1"/>
</dbReference>
<dbReference type="PROSITE" id="PS00950">
    <property type="entry name" value="BACTERIAL_OPSIN_1"/>
    <property type="match status" value="1"/>
</dbReference>
<feature type="chain" id="PRO_0000196266" description="Halorhodopsin">
    <location>
        <begin position="1" status="less than"/>
        <end position="206" status="greater than"/>
    </location>
</feature>
<feature type="transmembrane region" description="Helical; Name=Helix A" evidence="1">
    <location>
        <begin position="1" status="less than"/>
        <end position="15"/>
    </location>
</feature>
<feature type="topological domain" description="Cytoplasmic" evidence="1">
    <location>
        <begin position="16"/>
        <end position="21"/>
    </location>
</feature>
<feature type="transmembrane region" description="Helical; Name=Helix B" evidence="1">
    <location>
        <begin position="22"/>
        <end position="45"/>
    </location>
</feature>
<feature type="topological domain" description="Extracellular" evidence="1">
    <location>
        <begin position="46"/>
        <end position="75"/>
    </location>
</feature>
<feature type="transmembrane region" description="Helical; Name=Helix C" evidence="1">
    <location>
        <begin position="76"/>
        <end position="97"/>
    </location>
</feature>
<feature type="topological domain" description="Cytoplasmic" evidence="1">
    <location>
        <begin position="98"/>
        <end position="100"/>
    </location>
</feature>
<feature type="transmembrane region" description="Helical; Name=Helix D" evidence="1">
    <location>
        <begin position="101"/>
        <end position="124"/>
    </location>
</feature>
<feature type="topological domain" description="Extracellular" evidence="1">
    <location>
        <begin position="125"/>
        <end position="127"/>
    </location>
</feature>
<feature type="transmembrane region" description="Helical; Name=Helix E" evidence="1">
    <location>
        <begin position="128"/>
        <end position="150"/>
    </location>
</feature>
<feature type="topological domain" description="Cytoplasmic" evidence="1">
    <location>
        <begin position="151"/>
        <end position="162"/>
    </location>
</feature>
<feature type="transmembrane region" description="Helical; Name=Helix F" evidence="1">
    <location>
        <begin position="163"/>
        <end position="186"/>
    </location>
</feature>
<feature type="topological domain" description="Extracellular" evidence="1">
    <location>
        <begin position="187"/>
        <end position="195"/>
    </location>
</feature>
<feature type="transmembrane region" description="Helical; Name=Helix G" evidence="1">
    <location>
        <begin position="196"/>
        <end position="206" status="greater than"/>
    </location>
</feature>
<feature type="non-terminal residue">
    <location>
        <position position="1"/>
    </location>
</feature>
<feature type="non-terminal residue">
    <location>
        <position position="206"/>
    </location>
</feature>
<keyword id="KW-1003">Cell membrane</keyword>
<keyword id="KW-0868">Chloride</keyword>
<keyword id="KW-0157">Chromophore</keyword>
<keyword id="KW-0406">Ion transport</keyword>
<keyword id="KW-0472">Membrane</keyword>
<keyword id="KW-0600">Photoreceptor protein</keyword>
<keyword id="KW-0675">Receptor</keyword>
<keyword id="KW-0681">Retinal protein</keyword>
<keyword id="KW-0716">Sensory transduction</keyword>
<keyword id="KW-0812">Transmembrane</keyword>
<keyword id="KW-1133">Transmembrane helix</keyword>
<keyword id="KW-0813">Transport</keyword>
<comment type="function">
    <text>Light-driven chloride pump.</text>
</comment>
<comment type="subcellular location">
    <subcellularLocation>
        <location>Cell membrane</location>
        <topology>Multi-pass membrane protein</topology>
    </subcellularLocation>
</comment>
<comment type="similarity">
    <text evidence="2">Belongs to the archaeal/bacterial/fungal opsin family.</text>
</comment>
<accession>P33970</accession>
<evidence type="ECO:0000250" key="1"/>
<evidence type="ECO:0000305" key="2"/>
<organism>
    <name type="scientific">Halobacterium halobium (strain mex)</name>
    <dbReference type="NCBI Taxonomy" id="33003"/>
    <lineage>
        <taxon>Archaea</taxon>
        <taxon>Methanobacteriati</taxon>
        <taxon>Methanobacteriota</taxon>
        <taxon>Stenosarchaea group</taxon>
        <taxon>Halobacteria</taxon>
        <taxon>Halobacteriales</taxon>
        <taxon>Halobacteriaceae</taxon>
        <taxon>Halobacterium</taxon>
    </lineage>
</organism>
<proteinExistence type="inferred from homology"/>
<gene>
    <name type="primary">hop</name>
</gene>